<reference key="1">
    <citation type="submission" date="2007-03" db="EMBL/GenBank/DDBJ databases">
        <title>The NIAID influenza genome sequencing project.</title>
        <authorList>
            <person name="Ghedin E."/>
            <person name="Spiro D."/>
            <person name="Miller N."/>
            <person name="Zaborsky J."/>
            <person name="Feldblyum T."/>
            <person name="Subbu V."/>
            <person name="Shumway M."/>
            <person name="Sparenborg J."/>
            <person name="Groveman L."/>
            <person name="Halpin R."/>
            <person name="Sitz J."/>
            <person name="Koo H."/>
            <person name="Salzberg S.L."/>
            <person name="Webster R.G."/>
            <person name="Hoffmann E."/>
            <person name="Krauss S."/>
            <person name="Naeve C."/>
            <person name="Bao Y."/>
            <person name="Bolotov P."/>
            <person name="Dernovoy D."/>
            <person name="Kiryutin B."/>
            <person name="Lipman D.J."/>
            <person name="Tatusova T."/>
        </authorList>
    </citation>
    <scope>NUCLEOTIDE SEQUENCE [GENOMIC RNA]</scope>
</reference>
<reference key="2">
    <citation type="submission" date="2007-03" db="EMBL/GenBank/DDBJ databases">
        <authorList>
            <consortium name="The NIAID Influenza Genome Sequencing Consortium"/>
        </authorList>
    </citation>
    <scope>NUCLEOTIDE SEQUENCE [GENOMIC RNA]</scope>
</reference>
<feature type="chain" id="PRO_0000372967" description="Neuraminidase">
    <location>
        <begin position="1"/>
        <end position="469"/>
    </location>
</feature>
<feature type="topological domain" description="Intravirion" evidence="1">
    <location>
        <begin position="1"/>
        <end position="6"/>
    </location>
</feature>
<feature type="transmembrane region" description="Helical" evidence="1">
    <location>
        <begin position="7"/>
        <end position="27"/>
    </location>
</feature>
<feature type="topological domain" description="Virion surface" evidence="1">
    <location>
        <begin position="28"/>
        <end position="469"/>
    </location>
</feature>
<feature type="region of interest" description="Involved in apical transport and lipid raft association" evidence="1">
    <location>
        <begin position="11"/>
        <end position="33"/>
    </location>
</feature>
<feature type="region of interest" description="Hypervariable stalk region" evidence="1">
    <location>
        <begin position="36"/>
        <end position="90"/>
    </location>
</feature>
<feature type="region of interest" description="Head of neuraminidase" evidence="1">
    <location>
        <begin position="91"/>
        <end position="469"/>
    </location>
</feature>
<feature type="active site" description="Proton donor/acceptor" evidence="1">
    <location>
        <position position="151"/>
    </location>
</feature>
<feature type="active site" description="Nucleophile" evidence="1">
    <location>
        <position position="402"/>
    </location>
</feature>
<feature type="binding site" evidence="1">
    <location>
        <position position="118"/>
    </location>
    <ligand>
        <name>substrate</name>
    </ligand>
</feature>
<feature type="binding site" evidence="1">
    <location>
        <position position="152"/>
    </location>
    <ligand>
        <name>substrate</name>
    </ligand>
</feature>
<feature type="binding site" evidence="1">
    <location>
        <begin position="277"/>
        <end position="278"/>
    </location>
    <ligand>
        <name>substrate</name>
    </ligand>
</feature>
<feature type="binding site" evidence="1">
    <location>
        <position position="293"/>
    </location>
    <ligand>
        <name>substrate</name>
    </ligand>
</feature>
<feature type="binding site" evidence="1">
    <location>
        <position position="294"/>
    </location>
    <ligand>
        <name>Ca(2+)</name>
        <dbReference type="ChEBI" id="CHEBI:29108"/>
    </ligand>
</feature>
<feature type="binding site" evidence="1">
    <location>
        <position position="298"/>
    </location>
    <ligand>
        <name>Ca(2+)</name>
        <dbReference type="ChEBI" id="CHEBI:29108"/>
    </ligand>
</feature>
<feature type="binding site" evidence="1">
    <location>
        <position position="324"/>
    </location>
    <ligand>
        <name>Ca(2+)</name>
        <dbReference type="ChEBI" id="CHEBI:29108"/>
    </ligand>
</feature>
<feature type="binding site" evidence="1">
    <location>
        <position position="344"/>
    </location>
    <ligand>
        <name>Ca(2+)</name>
        <dbReference type="ChEBI" id="CHEBI:29108"/>
    </ligand>
</feature>
<feature type="binding site" evidence="1">
    <location>
        <position position="368"/>
    </location>
    <ligand>
        <name>substrate</name>
    </ligand>
</feature>
<feature type="glycosylation site" description="N-linked (GlcNAc...) asparagine; by host" evidence="1">
    <location>
        <position position="44"/>
    </location>
</feature>
<feature type="glycosylation site" description="N-linked (GlcNAc...) asparagine; by host" evidence="1">
    <location>
        <position position="50"/>
    </location>
</feature>
<feature type="glycosylation site" description="N-linked (GlcNAc...) asparagine; by host" evidence="1">
    <location>
        <position position="58"/>
    </location>
</feature>
<feature type="glycosylation site" description="N-linked (GlcNAc...) asparagine; by host" evidence="1">
    <location>
        <position position="63"/>
    </location>
</feature>
<feature type="glycosylation site" description="N-linked (GlcNAc...) asparagine; by host" evidence="1">
    <location>
        <position position="68"/>
    </location>
</feature>
<feature type="glycosylation site" description="N-linked (GlcNAc...) asparagine; by host" evidence="1">
    <location>
        <position position="88"/>
    </location>
</feature>
<feature type="glycosylation site" description="N-linked (GlcNAc...) asparagine; by host" evidence="1">
    <location>
        <position position="146"/>
    </location>
</feature>
<feature type="glycosylation site" description="N-linked (GlcNAc...) asparagine; by host" evidence="1">
    <location>
        <position position="235"/>
    </location>
</feature>
<feature type="glycosylation site" description="N-linked (GlcNAc...) asparagine; by host" evidence="1">
    <location>
        <position position="365"/>
    </location>
</feature>
<feature type="disulfide bond" evidence="1">
    <location>
        <begin position="92"/>
        <end position="417"/>
    </location>
</feature>
<feature type="disulfide bond" evidence="1">
    <location>
        <begin position="124"/>
        <end position="129"/>
    </location>
</feature>
<feature type="disulfide bond" evidence="1">
    <location>
        <begin position="184"/>
        <end position="231"/>
    </location>
</feature>
<feature type="disulfide bond" evidence="1">
    <location>
        <begin position="233"/>
        <end position="238"/>
    </location>
</feature>
<feature type="disulfide bond" evidence="1">
    <location>
        <begin position="279"/>
        <end position="292"/>
    </location>
</feature>
<feature type="disulfide bond" evidence="1">
    <location>
        <begin position="281"/>
        <end position="290"/>
    </location>
</feature>
<feature type="disulfide bond" evidence="1">
    <location>
        <begin position="318"/>
        <end position="335"/>
    </location>
</feature>
<feature type="disulfide bond" evidence="1">
    <location>
        <begin position="421"/>
        <end position="446"/>
    </location>
</feature>
<protein>
    <recommendedName>
        <fullName evidence="1">Neuraminidase</fullName>
        <ecNumber evidence="1">3.2.1.18</ecNumber>
    </recommendedName>
</protein>
<sequence>MNPNQKIITIGSICMVVGIISLILQIGNIISIWISHSIQTGSQNHTGTCNQSIITYKNSTWVNQTYVNISNTNVVAGKDTTSVILAGNSSLCPIRGWAIYSKDNGVRIGSKGDVFVIREPFISCSHLECRTFFLTQGALLNDKHSNGTVKDRSPYRALMSCPVGEAPSPYNSRFESVAWSASACHDGMGWLTIGISGPDDGAVAVLKYNGIITETIKSWRKEILRTQESECACVNGSCFTIMTDGPSGGPASYKIFKIEKGKVTKSIELDAPNSHYEECSCYPDTGKVMCVCRDNWHGSNRPWVSFDQNLDYQMGYICSGVFGDNPRPKDGKGNCGPVYVDGANGVKGFSYRYGNGVWIGRTKSNSSRQGFEMIWDPNGWTETDSNFFVKQDVVAVTDWSGYSGSFVQHPELTGLDCMRPCFWVELIRGRPKEKTIWTSGSSISFCGVNSDTVDWSWPDGAELPFTIDK</sequence>
<name>NRAM_I43A0</name>
<dbReference type="EC" id="3.2.1.18" evidence="1"/>
<dbReference type="EMBL" id="CY020463">
    <property type="protein sequence ID" value="ABO38376.1"/>
    <property type="molecule type" value="Viral_cRNA"/>
</dbReference>
<dbReference type="SMR" id="A4GCL1"/>
<dbReference type="CAZy" id="GH34">
    <property type="family name" value="Glycoside Hydrolase Family 34"/>
</dbReference>
<dbReference type="GlyCosmos" id="A4GCL1">
    <property type="glycosylation" value="9 sites, No reported glycans"/>
</dbReference>
<dbReference type="PRO" id="PR:A4GCL1"/>
<dbReference type="Proteomes" id="UP000008432">
    <property type="component" value="Genome"/>
</dbReference>
<dbReference type="GO" id="GO:0020002">
    <property type="term" value="C:host cell plasma membrane"/>
    <property type="evidence" value="ECO:0007669"/>
    <property type="project" value="UniProtKB-SubCell"/>
</dbReference>
<dbReference type="GO" id="GO:0016020">
    <property type="term" value="C:membrane"/>
    <property type="evidence" value="ECO:0007669"/>
    <property type="project" value="UniProtKB-UniRule"/>
</dbReference>
<dbReference type="GO" id="GO:0055036">
    <property type="term" value="C:virion membrane"/>
    <property type="evidence" value="ECO:0007669"/>
    <property type="project" value="UniProtKB-SubCell"/>
</dbReference>
<dbReference type="GO" id="GO:0004308">
    <property type="term" value="F:exo-alpha-sialidase activity"/>
    <property type="evidence" value="ECO:0007669"/>
    <property type="project" value="UniProtKB-UniRule"/>
</dbReference>
<dbReference type="GO" id="GO:0046872">
    <property type="term" value="F:metal ion binding"/>
    <property type="evidence" value="ECO:0007669"/>
    <property type="project" value="UniProtKB-UniRule"/>
</dbReference>
<dbReference type="GO" id="GO:0005975">
    <property type="term" value="P:carbohydrate metabolic process"/>
    <property type="evidence" value="ECO:0007669"/>
    <property type="project" value="InterPro"/>
</dbReference>
<dbReference type="GO" id="GO:0046761">
    <property type="term" value="P:viral budding from plasma membrane"/>
    <property type="evidence" value="ECO:0007669"/>
    <property type="project" value="UniProtKB-UniRule"/>
</dbReference>
<dbReference type="CDD" id="cd15483">
    <property type="entry name" value="Influenza_NA"/>
    <property type="match status" value="1"/>
</dbReference>
<dbReference type="FunFam" id="2.120.10.10:FF:000001">
    <property type="entry name" value="Neuraminidase"/>
    <property type="match status" value="1"/>
</dbReference>
<dbReference type="Gene3D" id="2.120.10.10">
    <property type="match status" value="1"/>
</dbReference>
<dbReference type="HAMAP" id="MF_04071">
    <property type="entry name" value="INFV_NRAM"/>
    <property type="match status" value="1"/>
</dbReference>
<dbReference type="InterPro" id="IPR001860">
    <property type="entry name" value="Glyco_hydro_34"/>
</dbReference>
<dbReference type="InterPro" id="IPR033654">
    <property type="entry name" value="Sialidase_Influenza_A/B"/>
</dbReference>
<dbReference type="InterPro" id="IPR036278">
    <property type="entry name" value="Sialidase_sf"/>
</dbReference>
<dbReference type="Pfam" id="PF00064">
    <property type="entry name" value="Neur"/>
    <property type="match status" value="1"/>
</dbReference>
<dbReference type="SUPFAM" id="SSF50939">
    <property type="entry name" value="Sialidases"/>
    <property type="match status" value="1"/>
</dbReference>
<proteinExistence type="inferred from homology"/>
<keyword id="KW-0106">Calcium</keyword>
<keyword id="KW-1015">Disulfide bond</keyword>
<keyword id="KW-0325">Glycoprotein</keyword>
<keyword id="KW-0326">Glycosidase</keyword>
<keyword id="KW-1032">Host cell membrane</keyword>
<keyword id="KW-1043">Host membrane</keyword>
<keyword id="KW-0378">Hydrolase</keyword>
<keyword id="KW-0472">Membrane</keyword>
<keyword id="KW-0479">Metal-binding</keyword>
<keyword id="KW-0735">Signal-anchor</keyword>
<keyword id="KW-0812">Transmembrane</keyword>
<keyword id="KW-1133">Transmembrane helix</keyword>
<keyword id="KW-0946">Virion</keyword>
<accession>A4GCL1</accession>
<organismHost>
    <name type="scientific">Aves</name>
    <dbReference type="NCBI Taxonomy" id="8782"/>
</organismHost>
<organismHost>
    <name type="scientific">Homo sapiens</name>
    <name type="common">Human</name>
    <dbReference type="NCBI Taxonomy" id="9606"/>
</organismHost>
<organismHost>
    <name type="scientific">Sus scrofa</name>
    <name type="common">Pig</name>
    <dbReference type="NCBI Taxonomy" id="9823"/>
</organismHost>
<organism>
    <name type="scientific">Influenza A virus (strain A/USA:Iowa/1943 H1N1)</name>
    <dbReference type="NCBI Taxonomy" id="425563"/>
    <lineage>
        <taxon>Viruses</taxon>
        <taxon>Riboviria</taxon>
        <taxon>Orthornavirae</taxon>
        <taxon>Negarnaviricota</taxon>
        <taxon>Polyploviricotina</taxon>
        <taxon>Insthoviricetes</taxon>
        <taxon>Articulavirales</taxon>
        <taxon>Orthomyxoviridae</taxon>
        <taxon>Alphainfluenzavirus</taxon>
        <taxon>Alphainfluenzavirus influenzae</taxon>
        <taxon>Influenza A virus</taxon>
    </lineage>
</organism>
<evidence type="ECO:0000255" key="1">
    <source>
        <dbReference type="HAMAP-Rule" id="MF_04071"/>
    </source>
</evidence>
<comment type="function">
    <text evidence="1">Catalyzes the removal of terminal sialic acid residues from viral and cellular glycoconjugates. Cleaves off the terminal sialic acids on the glycosylated HA during virus budding to facilitate virus release. Additionally helps virus spread through the circulation by further removing sialic acids from the cell surface. These cleavages prevent self-aggregation and ensure the efficient spread of the progeny virus from cell to cell. Otherwise, infection would be limited to one round of replication. Described as a receptor-destroying enzyme because it cleaves a terminal sialic acid from the cellular receptors. May facilitate viral invasion of the upper airways by cleaving the sialic acid moieties on the mucin of the airway epithelial cells. Likely to plays a role in the budding process through its association with lipid rafts during intracellular transport. May additionally display a raft-association independent effect on budding. Plays a role in the determination of host range restriction on replication and virulence. Sialidase activity in late endosome/lysosome traffic seems to enhance virus replication.</text>
</comment>
<comment type="catalytic activity">
    <reaction evidence="1">
        <text>Hydrolysis of alpha-(2-&gt;3)-, alpha-(2-&gt;6)-, alpha-(2-&gt;8)- glycosidic linkages of terminal sialic acid residues in oligosaccharides, glycoproteins, glycolipids, colominic acid and synthetic substrates.</text>
        <dbReference type="EC" id="3.2.1.18"/>
    </reaction>
</comment>
<comment type="cofactor">
    <cofactor evidence="1">
        <name>Ca(2+)</name>
        <dbReference type="ChEBI" id="CHEBI:29108"/>
    </cofactor>
</comment>
<comment type="activity regulation">
    <text evidence="1">Inhibited by the neuraminidase inhibitors zanamivir (Relenza) and oseltamivir (Tamiflu). These drugs interfere with the release of progeny virus from infected cells and are effective against all influenza strains. Resistance to neuraminidase inhibitors is quite rare.</text>
</comment>
<comment type="subunit">
    <text evidence="1">Homotetramer.</text>
</comment>
<comment type="subcellular location">
    <subcellularLocation>
        <location evidence="1">Virion membrane</location>
    </subcellularLocation>
    <subcellularLocation>
        <location evidence="1">Host apical cell membrane</location>
        <topology evidence="1">Single-pass type II membrane protein</topology>
    </subcellularLocation>
    <text evidence="1">Preferentially accumulates at the apical plasma membrane in infected polarized epithelial cells, which is the virus assembly site. Uses lipid rafts for cell surface transport and apical sorting. In the virion, forms a mushroom-shaped spike on the surface of the membrane.</text>
</comment>
<comment type="domain">
    <text evidence="1">Intact N-terminus is essential for virion morphogenesis. Possesses two apical sorting signals, one in the ectodomain, which is likely to be a glycan, and the other in the transmembrane domain. The transmembrane domain also plays a role in lipid raft association.</text>
</comment>
<comment type="PTM">
    <text evidence="1">N-glycosylated.</text>
</comment>
<comment type="miscellaneous">
    <text>The influenza A genome consist of 8 RNA segments. Genetic variation of hemagglutinin and/or neuraminidase genes results in the emergence of new influenza strains. The mechanism of variation can be the result of point mutations or the result of genetic reassortment between segments of two different strains.</text>
</comment>
<comment type="similarity">
    <text evidence="1">Belongs to the glycosyl hydrolase 34 family.</text>
</comment>
<gene>
    <name evidence="1" type="primary">NA</name>
</gene>